<sequence>MCTEQKPNLLKLSQLKMVLRALGYDPRNSKVQEMTRKIKDGRSMVMGWHGEKDYMDVDELWNALQSKDDEGDSTEDKVTTEMRSAFKLFDPESKGTITVANLKMVAKELGETLADADFDEMIREAGGDNNTGINEQQFFEIMKKTCLY</sequence>
<accession>P30644</accession>
<feature type="chain" id="PRO_0000073840" description="Uncharacterized calcium-binding protein R08D7.5">
    <location>
        <begin position="1"/>
        <end position="148"/>
    </location>
</feature>
<feature type="domain" description="EF-hand 1" evidence="1">
    <location>
        <begin position="77"/>
        <end position="112"/>
    </location>
</feature>
<feature type="domain" description="EF-hand 2" evidence="1">
    <location>
        <begin position="113"/>
        <end position="148"/>
    </location>
</feature>
<evidence type="ECO:0000255" key="1">
    <source>
        <dbReference type="PROSITE-ProRule" id="PRU00448"/>
    </source>
</evidence>
<protein>
    <recommendedName>
        <fullName>Uncharacterized calcium-binding protein R08D7.5</fullName>
    </recommendedName>
</protein>
<gene>
    <name type="ORF">R08D7.5</name>
</gene>
<organism>
    <name type="scientific">Caenorhabditis elegans</name>
    <dbReference type="NCBI Taxonomy" id="6239"/>
    <lineage>
        <taxon>Eukaryota</taxon>
        <taxon>Metazoa</taxon>
        <taxon>Ecdysozoa</taxon>
        <taxon>Nematoda</taxon>
        <taxon>Chromadorea</taxon>
        <taxon>Rhabditida</taxon>
        <taxon>Rhabditina</taxon>
        <taxon>Rhabditomorpha</taxon>
        <taxon>Rhabditoidea</taxon>
        <taxon>Rhabditidae</taxon>
        <taxon>Peloderinae</taxon>
        <taxon>Caenorhabditis</taxon>
    </lineage>
</organism>
<reference key="1">
    <citation type="journal article" date="1994" name="Nature">
        <title>2.2 Mb of contiguous nucleotide sequence from chromosome III of C. elegans.</title>
        <authorList>
            <person name="Wilson R."/>
            <person name="Ainscough R."/>
            <person name="Anderson K."/>
            <person name="Baynes C."/>
            <person name="Berks M."/>
            <person name="Bonfield J."/>
            <person name="Burton J."/>
            <person name="Connell M."/>
            <person name="Copsey T."/>
            <person name="Cooper J."/>
            <person name="Coulson A."/>
            <person name="Craxton M."/>
            <person name="Dear S."/>
            <person name="Du Z."/>
            <person name="Durbin R."/>
            <person name="Favello A."/>
            <person name="Fraser A."/>
            <person name="Fulton L."/>
            <person name="Gardner A."/>
            <person name="Green P."/>
            <person name="Hawkins T."/>
            <person name="Hillier L."/>
            <person name="Jier M."/>
            <person name="Johnston L."/>
            <person name="Jones M."/>
            <person name="Kershaw J."/>
            <person name="Kirsten J."/>
            <person name="Laisster N."/>
            <person name="Latreille P."/>
            <person name="Lightning J."/>
            <person name="Lloyd C."/>
            <person name="Mortimore B."/>
            <person name="O'Callaghan M."/>
            <person name="Parsons J."/>
            <person name="Percy C."/>
            <person name="Rifken L."/>
            <person name="Roopra A."/>
            <person name="Saunders D."/>
            <person name="Shownkeen R."/>
            <person name="Sims M."/>
            <person name="Smaldon N."/>
            <person name="Smith A."/>
            <person name="Smith M."/>
            <person name="Sonnhammer E."/>
            <person name="Staden R."/>
            <person name="Sulston J."/>
            <person name="Thierry-Mieg J."/>
            <person name="Thomas K."/>
            <person name="Vaudin M."/>
            <person name="Vaughan K."/>
            <person name="Waterston R."/>
            <person name="Watson A."/>
            <person name="Weinstock L."/>
            <person name="Wilkinson-Sproat J."/>
            <person name="Wohldman P."/>
        </authorList>
    </citation>
    <scope>NUCLEOTIDE SEQUENCE [LARGE SCALE GENOMIC DNA]</scope>
    <source>
        <strain>Bristol N2</strain>
    </source>
</reference>
<reference key="2">
    <citation type="journal article" date="1998" name="Science">
        <title>Genome sequence of the nematode C. elegans: a platform for investigating biology.</title>
        <authorList>
            <consortium name="The C. elegans sequencing consortium"/>
        </authorList>
    </citation>
    <scope>NUCLEOTIDE SEQUENCE [LARGE SCALE GENOMIC DNA]</scope>
    <source>
        <strain>Bristol N2</strain>
    </source>
</reference>
<dbReference type="EMBL" id="Z12017">
    <property type="protein sequence ID" value="CAA78051.2"/>
    <property type="molecule type" value="Genomic_DNA"/>
</dbReference>
<dbReference type="PIR" id="S41040">
    <property type="entry name" value="S24461"/>
</dbReference>
<dbReference type="RefSeq" id="NP_498986.3">
    <property type="nucleotide sequence ID" value="NM_066585.3"/>
</dbReference>
<dbReference type="SMR" id="P30644"/>
<dbReference type="FunCoup" id="P30644">
    <property type="interactions" value="60"/>
</dbReference>
<dbReference type="STRING" id="6239.R08D7.5.1"/>
<dbReference type="PaxDb" id="6239-R08D7.5"/>
<dbReference type="PeptideAtlas" id="P30644"/>
<dbReference type="EnsemblMetazoa" id="R08D7.5.1">
    <property type="protein sequence ID" value="R08D7.5.1"/>
    <property type="gene ID" value="WBGene00011145"/>
</dbReference>
<dbReference type="GeneID" id="187699"/>
<dbReference type="KEGG" id="cel:CELE_R08D7.5"/>
<dbReference type="UCSC" id="R08D7.5">
    <property type="organism name" value="c. elegans"/>
</dbReference>
<dbReference type="AGR" id="WB:WBGene00011145"/>
<dbReference type="CTD" id="187699"/>
<dbReference type="WormBase" id="R08D7.5">
    <property type="protein sequence ID" value="CE51740"/>
    <property type="gene ID" value="WBGene00011145"/>
</dbReference>
<dbReference type="eggNOG" id="KOG0028">
    <property type="taxonomic scope" value="Eukaryota"/>
</dbReference>
<dbReference type="HOGENOM" id="CLU_061288_18_2_1"/>
<dbReference type="InParanoid" id="P30644"/>
<dbReference type="OMA" id="YMDVDEL"/>
<dbReference type="OrthoDB" id="343296at2759"/>
<dbReference type="PhylomeDB" id="P30644"/>
<dbReference type="Reactome" id="R-CEL-5696394">
    <property type="pathway name" value="DNA Damage Recognition in GG-NER"/>
</dbReference>
<dbReference type="Reactome" id="R-CEL-5696395">
    <property type="pathway name" value="Formation of Incision Complex in GG-NER"/>
</dbReference>
<dbReference type="Reactome" id="R-CEL-9646399">
    <property type="pathway name" value="Aggrephagy"/>
</dbReference>
<dbReference type="PRO" id="PR:P30644"/>
<dbReference type="Proteomes" id="UP000001940">
    <property type="component" value="Chromosome III"/>
</dbReference>
<dbReference type="Bgee" id="WBGene00011145">
    <property type="expression patterns" value="Expressed in adult organism and 4 other cell types or tissues"/>
</dbReference>
<dbReference type="GO" id="GO:0005814">
    <property type="term" value="C:centriole"/>
    <property type="evidence" value="ECO:0000318"/>
    <property type="project" value="GO_Central"/>
</dbReference>
<dbReference type="GO" id="GO:0005813">
    <property type="term" value="C:centrosome"/>
    <property type="evidence" value="ECO:0000318"/>
    <property type="project" value="GO_Central"/>
</dbReference>
<dbReference type="GO" id="GO:0005634">
    <property type="term" value="C:nucleus"/>
    <property type="evidence" value="ECO:0000318"/>
    <property type="project" value="GO_Central"/>
</dbReference>
<dbReference type="GO" id="GO:0005509">
    <property type="term" value="F:calcium ion binding"/>
    <property type="evidence" value="ECO:0000318"/>
    <property type="project" value="GO_Central"/>
</dbReference>
<dbReference type="GO" id="GO:0007099">
    <property type="term" value="P:centriole replication"/>
    <property type="evidence" value="ECO:0000318"/>
    <property type="project" value="GO_Central"/>
</dbReference>
<dbReference type="GO" id="GO:0000226">
    <property type="term" value="P:microtubule cytoskeleton organization"/>
    <property type="evidence" value="ECO:0000318"/>
    <property type="project" value="GO_Central"/>
</dbReference>
<dbReference type="CDD" id="cd00051">
    <property type="entry name" value="EFh"/>
    <property type="match status" value="1"/>
</dbReference>
<dbReference type="FunFam" id="1.10.238.10:FF:000001">
    <property type="entry name" value="Calmodulin 1"/>
    <property type="match status" value="1"/>
</dbReference>
<dbReference type="Gene3D" id="1.10.238.10">
    <property type="entry name" value="EF-hand"/>
    <property type="match status" value="1"/>
</dbReference>
<dbReference type="InterPro" id="IPR050230">
    <property type="entry name" value="CALM/Myosin/TropC-like"/>
</dbReference>
<dbReference type="InterPro" id="IPR011992">
    <property type="entry name" value="EF-hand-dom_pair"/>
</dbReference>
<dbReference type="InterPro" id="IPR002048">
    <property type="entry name" value="EF_hand_dom"/>
</dbReference>
<dbReference type="PANTHER" id="PTHR23048:SF59">
    <property type="entry name" value="EF-HAND SUPERFAMILY PROTEIN"/>
    <property type="match status" value="1"/>
</dbReference>
<dbReference type="PANTHER" id="PTHR23048">
    <property type="entry name" value="MYOSIN LIGHT CHAIN 1, 3"/>
    <property type="match status" value="1"/>
</dbReference>
<dbReference type="Pfam" id="PF13499">
    <property type="entry name" value="EF-hand_7"/>
    <property type="match status" value="1"/>
</dbReference>
<dbReference type="SMART" id="SM00054">
    <property type="entry name" value="EFh"/>
    <property type="match status" value="2"/>
</dbReference>
<dbReference type="SUPFAM" id="SSF47473">
    <property type="entry name" value="EF-hand"/>
    <property type="match status" value="1"/>
</dbReference>
<dbReference type="PROSITE" id="PS50222">
    <property type="entry name" value="EF_HAND_2"/>
    <property type="match status" value="2"/>
</dbReference>
<name>YNE5_CAEEL</name>
<proteinExistence type="predicted"/>
<keyword id="KW-0106">Calcium</keyword>
<keyword id="KW-1185">Reference proteome</keyword>
<keyword id="KW-0677">Repeat</keyword>